<proteinExistence type="evidence at protein level"/>
<reference key="1">
    <citation type="journal article" date="1990" name="Science">
        <title>K+ current diversity is produced by an extended gene family conserved in Drosophila and mouse.</title>
        <authorList>
            <person name="Wei A.G."/>
            <person name="Covarrubias M."/>
            <person name="Butler A."/>
            <person name="Baker K."/>
            <person name="Pak M."/>
            <person name="Salkoff L."/>
        </authorList>
    </citation>
    <scope>NUCLEOTIDE SEQUENCE [MRNA] (ISOFORM A)</scope>
</reference>
<reference key="2">
    <citation type="journal article" date="1990" name="Nucleic Acids Res.">
        <title>Shal, Shab, and Shaw: three genes encoding potassium channels in Drosophila.</title>
        <authorList>
            <person name="Butler A."/>
            <person name="Wei A."/>
            <person name="Baker K."/>
            <person name="Salkoff L."/>
        </authorList>
    </citation>
    <scope>NUCLEOTIDE SEQUENCE [MRNA] (ISOFORM A)</scope>
</reference>
<reference key="3">
    <citation type="journal article" date="2000" name="Science">
        <title>The genome sequence of Drosophila melanogaster.</title>
        <authorList>
            <person name="Adams M.D."/>
            <person name="Celniker S.E."/>
            <person name="Holt R.A."/>
            <person name="Evans C.A."/>
            <person name="Gocayne J.D."/>
            <person name="Amanatides P.G."/>
            <person name="Scherer S.E."/>
            <person name="Li P.W."/>
            <person name="Hoskins R.A."/>
            <person name="Galle R.F."/>
            <person name="George R.A."/>
            <person name="Lewis S.E."/>
            <person name="Richards S."/>
            <person name="Ashburner M."/>
            <person name="Henderson S.N."/>
            <person name="Sutton G.G."/>
            <person name="Wortman J.R."/>
            <person name="Yandell M.D."/>
            <person name="Zhang Q."/>
            <person name="Chen L.X."/>
            <person name="Brandon R.C."/>
            <person name="Rogers Y.-H.C."/>
            <person name="Blazej R.G."/>
            <person name="Champe M."/>
            <person name="Pfeiffer B.D."/>
            <person name="Wan K.H."/>
            <person name="Doyle C."/>
            <person name="Baxter E.G."/>
            <person name="Helt G."/>
            <person name="Nelson C.R."/>
            <person name="Miklos G.L.G."/>
            <person name="Abril J.F."/>
            <person name="Agbayani A."/>
            <person name="An H.-J."/>
            <person name="Andrews-Pfannkoch C."/>
            <person name="Baldwin D."/>
            <person name="Ballew R.M."/>
            <person name="Basu A."/>
            <person name="Baxendale J."/>
            <person name="Bayraktaroglu L."/>
            <person name="Beasley E.M."/>
            <person name="Beeson K.Y."/>
            <person name="Benos P.V."/>
            <person name="Berman B.P."/>
            <person name="Bhandari D."/>
            <person name="Bolshakov S."/>
            <person name="Borkova D."/>
            <person name="Botchan M.R."/>
            <person name="Bouck J."/>
            <person name="Brokstein P."/>
            <person name="Brottier P."/>
            <person name="Burtis K.C."/>
            <person name="Busam D.A."/>
            <person name="Butler H."/>
            <person name="Cadieu E."/>
            <person name="Center A."/>
            <person name="Chandra I."/>
            <person name="Cherry J.M."/>
            <person name="Cawley S."/>
            <person name="Dahlke C."/>
            <person name="Davenport L.B."/>
            <person name="Davies P."/>
            <person name="de Pablos B."/>
            <person name="Delcher A."/>
            <person name="Deng Z."/>
            <person name="Mays A.D."/>
            <person name="Dew I."/>
            <person name="Dietz S.M."/>
            <person name="Dodson K."/>
            <person name="Doup L.E."/>
            <person name="Downes M."/>
            <person name="Dugan-Rocha S."/>
            <person name="Dunkov B.C."/>
            <person name="Dunn P."/>
            <person name="Durbin K.J."/>
            <person name="Evangelista C.C."/>
            <person name="Ferraz C."/>
            <person name="Ferriera S."/>
            <person name="Fleischmann W."/>
            <person name="Fosler C."/>
            <person name="Gabrielian A.E."/>
            <person name="Garg N.S."/>
            <person name="Gelbart W.M."/>
            <person name="Glasser K."/>
            <person name="Glodek A."/>
            <person name="Gong F."/>
            <person name="Gorrell J.H."/>
            <person name="Gu Z."/>
            <person name="Guan P."/>
            <person name="Harris M."/>
            <person name="Harris N.L."/>
            <person name="Harvey D.A."/>
            <person name="Heiman T.J."/>
            <person name="Hernandez J.R."/>
            <person name="Houck J."/>
            <person name="Hostin D."/>
            <person name="Houston K.A."/>
            <person name="Howland T.J."/>
            <person name="Wei M.-H."/>
            <person name="Ibegwam C."/>
            <person name="Jalali M."/>
            <person name="Kalush F."/>
            <person name="Karpen G.H."/>
            <person name="Ke Z."/>
            <person name="Kennison J.A."/>
            <person name="Ketchum K.A."/>
            <person name="Kimmel B.E."/>
            <person name="Kodira C.D."/>
            <person name="Kraft C.L."/>
            <person name="Kravitz S."/>
            <person name="Kulp D."/>
            <person name="Lai Z."/>
            <person name="Lasko P."/>
            <person name="Lei Y."/>
            <person name="Levitsky A.A."/>
            <person name="Li J.H."/>
            <person name="Li Z."/>
            <person name="Liang Y."/>
            <person name="Lin X."/>
            <person name="Liu X."/>
            <person name="Mattei B."/>
            <person name="McIntosh T.C."/>
            <person name="McLeod M.P."/>
            <person name="McPherson D."/>
            <person name="Merkulov G."/>
            <person name="Milshina N.V."/>
            <person name="Mobarry C."/>
            <person name="Morris J."/>
            <person name="Moshrefi A."/>
            <person name="Mount S.M."/>
            <person name="Moy M."/>
            <person name="Murphy B."/>
            <person name="Murphy L."/>
            <person name="Muzny D.M."/>
            <person name="Nelson D.L."/>
            <person name="Nelson D.R."/>
            <person name="Nelson K.A."/>
            <person name="Nixon K."/>
            <person name="Nusskern D.R."/>
            <person name="Pacleb J.M."/>
            <person name="Palazzolo M."/>
            <person name="Pittman G.S."/>
            <person name="Pan S."/>
            <person name="Pollard J."/>
            <person name="Puri V."/>
            <person name="Reese M.G."/>
            <person name="Reinert K."/>
            <person name="Remington K."/>
            <person name="Saunders R.D.C."/>
            <person name="Scheeler F."/>
            <person name="Shen H."/>
            <person name="Shue B.C."/>
            <person name="Siden-Kiamos I."/>
            <person name="Simpson M."/>
            <person name="Skupski M.P."/>
            <person name="Smith T.J."/>
            <person name="Spier E."/>
            <person name="Spradling A.C."/>
            <person name="Stapleton M."/>
            <person name="Strong R."/>
            <person name="Sun E."/>
            <person name="Svirskas R."/>
            <person name="Tector C."/>
            <person name="Turner R."/>
            <person name="Venter E."/>
            <person name="Wang A.H."/>
            <person name="Wang X."/>
            <person name="Wang Z.-Y."/>
            <person name="Wassarman D.A."/>
            <person name="Weinstock G.M."/>
            <person name="Weissenbach J."/>
            <person name="Williams S.M."/>
            <person name="Woodage T."/>
            <person name="Worley K.C."/>
            <person name="Wu D."/>
            <person name="Yang S."/>
            <person name="Yao Q.A."/>
            <person name="Ye J."/>
            <person name="Yeh R.-F."/>
            <person name="Zaveri J.S."/>
            <person name="Zhan M."/>
            <person name="Zhang G."/>
            <person name="Zhao Q."/>
            <person name="Zheng L."/>
            <person name="Zheng X.H."/>
            <person name="Zhong F.N."/>
            <person name="Zhong W."/>
            <person name="Zhou X."/>
            <person name="Zhu S.C."/>
            <person name="Zhu X."/>
            <person name="Smith H.O."/>
            <person name="Gibbs R.A."/>
            <person name="Myers E.W."/>
            <person name="Rubin G.M."/>
            <person name="Venter J.C."/>
        </authorList>
    </citation>
    <scope>NUCLEOTIDE SEQUENCE [LARGE SCALE GENOMIC DNA]</scope>
    <source>
        <strain>Berkeley</strain>
    </source>
</reference>
<reference key="4">
    <citation type="journal article" date="2002" name="Genome Biol.">
        <title>Annotation of the Drosophila melanogaster euchromatic genome: a systematic review.</title>
        <authorList>
            <person name="Misra S."/>
            <person name="Crosby M.A."/>
            <person name="Mungall C.J."/>
            <person name="Matthews B.B."/>
            <person name="Campbell K.S."/>
            <person name="Hradecky P."/>
            <person name="Huang Y."/>
            <person name="Kaminker J.S."/>
            <person name="Millburn G.H."/>
            <person name="Prochnik S.E."/>
            <person name="Smith C.D."/>
            <person name="Tupy J.L."/>
            <person name="Whitfield E.J."/>
            <person name="Bayraktaroglu L."/>
            <person name="Berman B.P."/>
            <person name="Bettencourt B.R."/>
            <person name="Celniker S.E."/>
            <person name="de Grey A.D.N.J."/>
            <person name="Drysdale R.A."/>
            <person name="Harris N.L."/>
            <person name="Richter J."/>
            <person name="Russo S."/>
            <person name="Schroeder A.J."/>
            <person name="Shu S.Q."/>
            <person name="Stapleton M."/>
            <person name="Yamada C."/>
            <person name="Ashburner M."/>
            <person name="Gelbart W.M."/>
            <person name="Rubin G.M."/>
            <person name="Lewis S.E."/>
        </authorList>
    </citation>
    <scope>GENOME REANNOTATION</scope>
    <scope>ALTERNATIVE SPLICING</scope>
    <source>
        <strain>Berkeley</strain>
    </source>
</reference>
<reference key="5">
    <citation type="submission" date="2006-01" db="EMBL/GenBank/DDBJ databases">
        <authorList>
            <person name="Stapleton M."/>
            <person name="Carlson J.W."/>
            <person name="Chavez C."/>
            <person name="Frise E."/>
            <person name="George R.A."/>
            <person name="Pacleb J.M."/>
            <person name="Park S."/>
            <person name="Wan K.H."/>
            <person name="Yu C."/>
            <person name="Celniker S.E."/>
        </authorList>
    </citation>
    <scope>NUCLEOTIDE SEQUENCE [LARGE SCALE MRNA] (ISOFORM A)</scope>
    <source>
        <strain>Berkeley</strain>
        <tissue>Embryo</tissue>
    </source>
</reference>
<reference key="6">
    <citation type="journal article" date="2010" name="Mol. Cell. Neurosci.">
        <title>SIDL interacts with the dendritic targeting motif of Shal (K(v)4) K+ channels in Drosophila.</title>
        <authorList>
            <person name="Diao F."/>
            <person name="Chaufty J."/>
            <person name="Waro G."/>
            <person name="Tsunoda S."/>
        </authorList>
    </citation>
    <scope>INTERACTION WITH SIDL</scope>
    <scope>TISSUE SPECIFICITY</scope>
    <scope>MUTAGENESIS OF 481-LEU-LEU-482</scope>
</reference>
<gene>
    <name type="primary">Shal</name>
    <name type="synonym">SHAL2</name>
    <name type="ORF">CG9262</name>
</gene>
<feature type="chain" id="PRO_0000053966" description="Potassium voltage-gated channel protein Shal">
    <location>
        <begin position="1"/>
        <end position="571"/>
    </location>
</feature>
<feature type="transmembrane region" description="Helical; Name=Segment S1">
    <location>
        <begin position="186"/>
        <end position="204"/>
    </location>
</feature>
<feature type="transmembrane region" description="Helical; Name=Segment S2">
    <location>
        <begin position="229"/>
        <end position="250"/>
    </location>
</feature>
<feature type="transmembrane region" description="Helical; Name=Segment S3">
    <location>
        <begin position="261"/>
        <end position="282"/>
    </location>
</feature>
<feature type="transmembrane region" description="Helical; Name=Segment S4">
    <location>
        <begin position="290"/>
        <end position="308"/>
    </location>
</feature>
<feature type="transmembrane region" description="Helical; Name=Segment S5">
    <location>
        <begin position="324"/>
        <end position="345"/>
    </location>
</feature>
<feature type="transmembrane region" description="Helical; Name=Segment S6">
    <location>
        <begin position="385"/>
        <end position="406"/>
    </location>
</feature>
<feature type="region of interest" description="Mediates dendritic targeting" evidence="1">
    <location>
        <begin position="474"/>
        <end position="489"/>
    </location>
</feature>
<feature type="region of interest" description="Disordered" evidence="3">
    <location>
        <begin position="500"/>
        <end position="520"/>
    </location>
</feature>
<feature type="short sequence motif" description="Selectivity filter" evidence="1">
    <location>
        <begin position="370"/>
        <end position="375"/>
    </location>
</feature>
<feature type="glycosylation site" description="N-linked (GlcNAc...) asparagine" evidence="2">
    <location>
        <position position="46"/>
    </location>
</feature>
<feature type="glycosylation site" description="N-linked (GlcNAc...) asparagine" evidence="2">
    <location>
        <position position="350"/>
    </location>
</feature>
<feature type="glycosylation site" description="N-linked (GlcNAc...) asparagine" evidence="2">
    <location>
        <position position="353"/>
    </location>
</feature>
<feature type="glycosylation site" description="N-linked (GlcNAc...) asparagine" evidence="2">
    <location>
        <position position="408"/>
    </location>
</feature>
<feature type="splice variant" id="VSP_042874" description="In isoform A." evidence="5 6 7">
    <original>D</original>
    <variation>M</variation>
    <location>
        <position position="490"/>
    </location>
</feature>
<feature type="splice variant" id="VSP_042875" description="In isoform A." evidence="5 6 7">
    <location>
        <begin position="491"/>
        <end position="571"/>
    </location>
</feature>
<feature type="mutagenesis site" description="Reduced binding to SIDL." evidence="4">
    <original>LL</original>
    <variation>AA</variation>
    <location>
        <begin position="481"/>
        <end position="482"/>
    </location>
</feature>
<dbReference type="EMBL" id="M32660">
    <property type="protein sequence ID" value="AAA28895.1"/>
    <property type="molecule type" value="mRNA"/>
</dbReference>
<dbReference type="EMBL" id="AE014296">
    <property type="protein sequence ID" value="AAF49144.2"/>
    <property type="molecule type" value="Genomic_DNA"/>
</dbReference>
<dbReference type="EMBL" id="AE014296">
    <property type="protein sequence ID" value="ABW08570.1"/>
    <property type="molecule type" value="Genomic_DNA"/>
</dbReference>
<dbReference type="EMBL" id="BT024203">
    <property type="protein sequence ID" value="ABC86265.1"/>
    <property type="molecule type" value="mRNA"/>
</dbReference>
<dbReference type="PIR" id="A35312">
    <property type="entry name" value="A35312"/>
</dbReference>
<dbReference type="RefSeq" id="NP_001097646.1">
    <molecule id="P17971-2"/>
    <property type="nucleotide sequence ID" value="NM_001104176.2"/>
</dbReference>
<dbReference type="RefSeq" id="NP_524159.1">
    <molecule id="P17971-1"/>
    <property type="nucleotide sequence ID" value="NM_079435.4"/>
</dbReference>
<dbReference type="SMR" id="P17971"/>
<dbReference type="BioGRID" id="65399">
    <property type="interactions" value="4"/>
</dbReference>
<dbReference type="DIP" id="DIP-19398N"/>
<dbReference type="FunCoup" id="P17971">
    <property type="interactions" value="261"/>
</dbReference>
<dbReference type="IntAct" id="P17971">
    <property type="interactions" value="2"/>
</dbReference>
<dbReference type="STRING" id="7227.FBpp0111766"/>
<dbReference type="TCDB" id="1.A.1.2.3">
    <property type="family name" value="the voltage-gated ion channel (vic) superfamily"/>
</dbReference>
<dbReference type="GlyCosmos" id="P17971">
    <property type="glycosylation" value="4 sites, No reported glycans"/>
</dbReference>
<dbReference type="GlyGen" id="P17971">
    <property type="glycosylation" value="4 sites"/>
</dbReference>
<dbReference type="PaxDb" id="7227-FBpp0111766"/>
<dbReference type="DNASU" id="40129"/>
<dbReference type="EnsemblMetazoa" id="FBtr0074973">
    <molecule id="P17971-1"/>
    <property type="protein sequence ID" value="FBpp0074741"/>
    <property type="gene ID" value="FBgn0005564"/>
</dbReference>
<dbReference type="EnsemblMetazoa" id="FBtr0112853">
    <molecule id="P17971-2"/>
    <property type="protein sequence ID" value="FBpp0111766"/>
    <property type="gene ID" value="FBgn0005564"/>
</dbReference>
<dbReference type="GeneID" id="40129"/>
<dbReference type="KEGG" id="dme:Dmel_CG9262"/>
<dbReference type="UCSC" id="CG9262-RB">
    <property type="organism name" value="d. melanogaster"/>
</dbReference>
<dbReference type="AGR" id="FB:FBgn0005564"/>
<dbReference type="CTD" id="40129"/>
<dbReference type="FlyBase" id="FBgn0005564">
    <property type="gene designation" value="Shal"/>
</dbReference>
<dbReference type="VEuPathDB" id="VectorBase:FBgn0005564"/>
<dbReference type="eggNOG" id="KOG4390">
    <property type="taxonomic scope" value="Eukaryota"/>
</dbReference>
<dbReference type="GeneTree" id="ENSGT00940000155343"/>
<dbReference type="InParanoid" id="P17971"/>
<dbReference type="OMA" id="SCMEVTT"/>
<dbReference type="OrthoDB" id="433309at2759"/>
<dbReference type="PhylomeDB" id="P17971"/>
<dbReference type="Reactome" id="R-DME-1296072">
    <property type="pathway name" value="Voltage gated Potassium channels"/>
</dbReference>
<dbReference type="Reactome" id="R-DME-5576894">
    <property type="pathway name" value="Phase 1 - inactivation of fast Na+ channels"/>
</dbReference>
<dbReference type="SignaLink" id="P17971"/>
<dbReference type="BioGRID-ORCS" id="40129">
    <property type="hits" value="0 hits in 3 CRISPR screens"/>
</dbReference>
<dbReference type="GenomeRNAi" id="40129"/>
<dbReference type="PRO" id="PR:P17971"/>
<dbReference type="Proteomes" id="UP000000803">
    <property type="component" value="Chromosome 3L"/>
</dbReference>
<dbReference type="Bgee" id="FBgn0005564">
    <property type="expression patterns" value="Expressed in lamina monopolar neuron L2 (Drosophila) in insect head and 166 other cell types or tissues"/>
</dbReference>
<dbReference type="ExpressionAtlas" id="P17971">
    <property type="expression patterns" value="baseline and differential"/>
</dbReference>
<dbReference type="GO" id="GO:0030425">
    <property type="term" value="C:dendrite"/>
    <property type="evidence" value="ECO:0007669"/>
    <property type="project" value="UniProtKB-SubCell"/>
</dbReference>
<dbReference type="GO" id="GO:0016020">
    <property type="term" value="C:membrane"/>
    <property type="evidence" value="ECO:0000318"/>
    <property type="project" value="GO_Central"/>
</dbReference>
<dbReference type="GO" id="GO:0043204">
    <property type="term" value="C:perikaryon"/>
    <property type="evidence" value="ECO:0007669"/>
    <property type="project" value="UniProtKB-SubCell"/>
</dbReference>
<dbReference type="GO" id="GO:0005886">
    <property type="term" value="C:plasma membrane"/>
    <property type="evidence" value="ECO:0000250"/>
    <property type="project" value="FlyBase"/>
</dbReference>
<dbReference type="GO" id="GO:0045202">
    <property type="term" value="C:synapse"/>
    <property type="evidence" value="ECO:0007669"/>
    <property type="project" value="GOC"/>
</dbReference>
<dbReference type="GO" id="GO:0008076">
    <property type="term" value="C:voltage-gated potassium channel complex"/>
    <property type="evidence" value="ECO:0000318"/>
    <property type="project" value="GO_Central"/>
</dbReference>
<dbReference type="GO" id="GO:0005250">
    <property type="term" value="F:A-type (transient outward) potassium channel activity"/>
    <property type="evidence" value="ECO:0000314"/>
    <property type="project" value="FlyBase"/>
</dbReference>
<dbReference type="GO" id="GO:0005249">
    <property type="term" value="F:voltage-gated potassium channel activity"/>
    <property type="evidence" value="ECO:0000304"/>
    <property type="project" value="FlyBase"/>
</dbReference>
<dbReference type="GO" id="GO:0001508">
    <property type="term" value="P:action potential"/>
    <property type="evidence" value="ECO:0000318"/>
    <property type="project" value="GO_Central"/>
</dbReference>
<dbReference type="GO" id="GO:0008306">
    <property type="term" value="P:associative learning"/>
    <property type="evidence" value="ECO:0000315"/>
    <property type="project" value="FlyBase"/>
</dbReference>
<dbReference type="GO" id="GO:0007268">
    <property type="term" value="P:chemical synaptic transmission"/>
    <property type="evidence" value="ECO:0000315"/>
    <property type="project" value="FlyBase"/>
</dbReference>
<dbReference type="GO" id="GO:0071805">
    <property type="term" value="P:potassium ion transmembrane transport"/>
    <property type="evidence" value="ECO:0000318"/>
    <property type="project" value="GO_Central"/>
</dbReference>
<dbReference type="GO" id="GO:0006813">
    <property type="term" value="P:potassium ion transport"/>
    <property type="evidence" value="ECO:0000304"/>
    <property type="project" value="FlyBase"/>
</dbReference>
<dbReference type="GO" id="GO:0051260">
    <property type="term" value="P:protein homooligomerization"/>
    <property type="evidence" value="ECO:0007669"/>
    <property type="project" value="InterPro"/>
</dbReference>
<dbReference type="CDD" id="cd18420">
    <property type="entry name" value="BTB_POZ_Shal-like"/>
    <property type="match status" value="1"/>
</dbReference>
<dbReference type="FunFam" id="1.20.120.350:FF:000016">
    <property type="entry name" value="Potassium voltage-gated channel subfamily D member 3"/>
    <property type="match status" value="1"/>
</dbReference>
<dbReference type="FunFam" id="3.30.710.10:FF:000004">
    <property type="entry name" value="Potassium voltage-gated channel subfamily D member 3"/>
    <property type="match status" value="1"/>
</dbReference>
<dbReference type="FunFam" id="1.10.287.70:FF:000028">
    <property type="entry name" value="potassium voltage-gated channel subfamily D member 3"/>
    <property type="match status" value="1"/>
</dbReference>
<dbReference type="Gene3D" id="1.10.287.70">
    <property type="match status" value="1"/>
</dbReference>
<dbReference type="Gene3D" id="3.30.710.10">
    <property type="entry name" value="Potassium Channel Kv1.1, Chain A"/>
    <property type="match status" value="1"/>
</dbReference>
<dbReference type="Gene3D" id="1.20.120.350">
    <property type="entry name" value="Voltage-gated potassium channels. Chain C"/>
    <property type="match status" value="1"/>
</dbReference>
<dbReference type="InterPro" id="IPR000210">
    <property type="entry name" value="BTB/POZ_dom"/>
</dbReference>
<dbReference type="InterPro" id="IPR005821">
    <property type="entry name" value="Ion_trans_dom"/>
</dbReference>
<dbReference type="InterPro" id="IPR003968">
    <property type="entry name" value="K_chnl_volt-dep_Kv"/>
</dbReference>
<dbReference type="InterPro" id="IPR003975">
    <property type="entry name" value="K_chnl_volt-dep_Kv4"/>
</dbReference>
<dbReference type="InterPro" id="IPR024587">
    <property type="entry name" value="K_chnl_volt-dep_Kv4_C"/>
</dbReference>
<dbReference type="InterPro" id="IPR021645">
    <property type="entry name" value="Shal-type_N"/>
</dbReference>
<dbReference type="InterPro" id="IPR011333">
    <property type="entry name" value="SKP1/BTB/POZ_sf"/>
</dbReference>
<dbReference type="InterPro" id="IPR003131">
    <property type="entry name" value="T1-type_BTB"/>
</dbReference>
<dbReference type="InterPro" id="IPR028325">
    <property type="entry name" value="VG_K_chnl"/>
</dbReference>
<dbReference type="InterPro" id="IPR027359">
    <property type="entry name" value="Volt_channel_dom_sf"/>
</dbReference>
<dbReference type="PANTHER" id="PTHR11537:SF105">
    <property type="entry name" value="POTASSIUM VOLTAGE-GATED CHANNEL PROTEIN SHAL"/>
    <property type="match status" value="1"/>
</dbReference>
<dbReference type="PANTHER" id="PTHR11537">
    <property type="entry name" value="VOLTAGE-GATED POTASSIUM CHANNEL"/>
    <property type="match status" value="1"/>
</dbReference>
<dbReference type="Pfam" id="PF02214">
    <property type="entry name" value="BTB_2"/>
    <property type="match status" value="1"/>
</dbReference>
<dbReference type="Pfam" id="PF11879">
    <property type="entry name" value="DUF3399"/>
    <property type="match status" value="1"/>
</dbReference>
<dbReference type="Pfam" id="PF00520">
    <property type="entry name" value="Ion_trans"/>
    <property type="match status" value="1"/>
</dbReference>
<dbReference type="Pfam" id="PF11601">
    <property type="entry name" value="Shal-type"/>
    <property type="match status" value="1"/>
</dbReference>
<dbReference type="PRINTS" id="PR00169">
    <property type="entry name" value="KCHANNEL"/>
</dbReference>
<dbReference type="PRINTS" id="PR01491">
    <property type="entry name" value="KVCHANNEL"/>
</dbReference>
<dbReference type="PRINTS" id="PR01497">
    <property type="entry name" value="SHALCHANNEL"/>
</dbReference>
<dbReference type="SMART" id="SM00225">
    <property type="entry name" value="BTB"/>
    <property type="match status" value="1"/>
</dbReference>
<dbReference type="SUPFAM" id="SSF54695">
    <property type="entry name" value="POZ domain"/>
    <property type="match status" value="1"/>
</dbReference>
<dbReference type="SUPFAM" id="SSF81324">
    <property type="entry name" value="Voltage-gated potassium channels"/>
    <property type="match status" value="1"/>
</dbReference>
<protein>
    <recommendedName>
        <fullName>Potassium voltage-gated channel protein Shal</fullName>
    </recommendedName>
    <alternativeName>
        <fullName>Shaker cognate l</fullName>
    </alternativeName>
    <alternativeName>
        <fullName>Shal2</fullName>
    </alternativeName>
</protein>
<name>KCNAL_DROME</name>
<sequence>MASVAAWLPFARAAAIGWVPIATHPLPPPPMPKDRRKTDDEKLLINVSGRRFETWRNTLEKYPDTLLGSNEREFFYDEDCKEYFFDRDPDIFRHILNYYRTGKLHYPKHECLTSYDEELAFFGIMPDVIGDCCYEDYRDRKRENAERLMDDKLSENGDQNLQQLTNMRQKMWRAFENPHTSTSALVFYYVTGFFIAVSVMANVVETVPCGHRPGRAGTLPCGERYKIVFFCLDTACVMIFTAEYLLRLFAAPDRCKFVRSVMSIIDVVAIMPYYIGLGITDNDDVSGAFVTLRVFRVFRIFKFSRHSQGLRILGYTLKSCASELGFLVFSLAMAIIIFATVMFYAEKNVNGTNFTSIPAAFWYTIVTMTTLGYGDMVPETIAGKIVGGVCSLSGVLVIALPVPVIVSNFSRIYHQNQRADKRKAQRKARLARIRIAKASSGAAFVSKKKAAEARWAAQESGIELDDNYRDEDIFELQHHHLLRCLEKTTDREFVELEIPFNGQPKRPGSPSPMASPAHSTNSAAGLLQSCCGRCCSQRYQACGKYMPAASNAQNSQNNQPMDGTYLVEASF</sequence>
<accession>P17971</accession>
<accession>A8JNV8</accession>
<accession>Q29R37</accession>
<accession>Q9VW11</accession>
<organism>
    <name type="scientific">Drosophila melanogaster</name>
    <name type="common">Fruit fly</name>
    <dbReference type="NCBI Taxonomy" id="7227"/>
    <lineage>
        <taxon>Eukaryota</taxon>
        <taxon>Metazoa</taxon>
        <taxon>Ecdysozoa</taxon>
        <taxon>Arthropoda</taxon>
        <taxon>Hexapoda</taxon>
        <taxon>Insecta</taxon>
        <taxon>Pterygota</taxon>
        <taxon>Neoptera</taxon>
        <taxon>Endopterygota</taxon>
        <taxon>Diptera</taxon>
        <taxon>Brachycera</taxon>
        <taxon>Muscomorpha</taxon>
        <taxon>Ephydroidea</taxon>
        <taxon>Drosophilidae</taxon>
        <taxon>Drosophila</taxon>
        <taxon>Sophophora</taxon>
    </lineage>
</organism>
<comment type="function">
    <text>Mediates the voltage-dependent potassium ion permeability of excitable membranes. Assuming opened or closed conformations in response to the voltage difference across the membrane, the protein forms a potassium-selective channel through which potassium ions may pass in accordance with their electrochemical gradient. May play a role in the nervous system and in the regulation of beating frequency in pacemaker cells.</text>
</comment>
<comment type="subunit">
    <text evidence="1 4">Heterotetramer of potassium channel proteins (By similarity). Interacts (via C-terminal dendritic targeting motif) with SIDL.</text>
</comment>
<comment type="subcellular location">
    <subcellularLocation>
        <location>Membrane</location>
        <topology>Multi-pass membrane protein</topology>
    </subcellularLocation>
    <subcellularLocation>
        <location>Cell projection</location>
        <location>Dendrite</location>
    </subcellularLocation>
    <subcellularLocation>
        <location>Perikaryon</location>
    </subcellularLocation>
</comment>
<comment type="alternative products">
    <event type="alternative splicing"/>
    <isoform>
        <id>P17971-2</id>
        <name>B</name>
        <name>Shal1</name>
        <sequence type="displayed"/>
    </isoform>
    <isoform>
        <id>P17971-1</id>
        <name>A</name>
        <sequence type="described" ref="VSP_042874 VSP_042875"/>
    </isoform>
</comment>
<comment type="tissue specificity">
    <text evidence="4">Co-expressed with SIDL in the nervous system.</text>
</comment>
<comment type="domain">
    <text>The N-terminus may be important in determining the rate of inactivation of the channel while the tail may play a role in modulation of channel activity and/or targeting of the channel to specific subcellular compartments.</text>
</comment>
<comment type="miscellaneous">
    <text>The segment S4 is probably the voltage-sensor and is characterized by a series of positively charged amino acids at every third position.</text>
</comment>
<comment type="similarity">
    <text evidence="8">Belongs to the potassium channel family. D (Shal) (TC 1.A.1.2) subfamily. Shal sub-subfamily.</text>
</comment>
<keyword id="KW-0025">Alternative splicing</keyword>
<keyword id="KW-0966">Cell projection</keyword>
<keyword id="KW-0325">Glycoprotein</keyword>
<keyword id="KW-0407">Ion channel</keyword>
<keyword id="KW-0406">Ion transport</keyword>
<keyword id="KW-0472">Membrane</keyword>
<keyword id="KW-0630">Potassium</keyword>
<keyword id="KW-0631">Potassium channel</keyword>
<keyword id="KW-0633">Potassium transport</keyword>
<keyword id="KW-1185">Reference proteome</keyword>
<keyword id="KW-0812">Transmembrane</keyword>
<keyword id="KW-1133">Transmembrane helix</keyword>
<keyword id="KW-0813">Transport</keyword>
<keyword id="KW-0851">Voltage-gated channel</keyword>
<evidence type="ECO:0000250" key="1"/>
<evidence type="ECO:0000255" key="2"/>
<evidence type="ECO:0000256" key="3">
    <source>
        <dbReference type="SAM" id="MobiDB-lite"/>
    </source>
</evidence>
<evidence type="ECO:0000269" key="4">
    <source>
    </source>
</evidence>
<evidence type="ECO:0000303" key="5">
    <source>
    </source>
</evidence>
<evidence type="ECO:0000303" key="6">
    <source>
    </source>
</evidence>
<evidence type="ECO:0000303" key="7">
    <source ref="5"/>
</evidence>
<evidence type="ECO:0000305" key="8"/>